<proteinExistence type="evidence at protein level"/>
<dbReference type="EMBL" id="AC116083">
    <property type="status" value="NOT_ANNOTATED_CDS"/>
    <property type="molecule type" value="Genomic_DNA"/>
</dbReference>
<dbReference type="EMBL" id="CH474049">
    <property type="protein sequence ID" value="EDM14287.1"/>
    <property type="molecule type" value="Genomic_DNA"/>
</dbReference>
<dbReference type="RefSeq" id="NP_001100734.1">
    <molecule id="D3Z9H7-1"/>
    <property type="nucleotide sequence ID" value="NM_001107264.1"/>
</dbReference>
<dbReference type="RefSeq" id="XP_063130327.1">
    <molecule id="D3Z9H7-1"/>
    <property type="nucleotide sequence ID" value="XM_063274257.1"/>
</dbReference>
<dbReference type="RefSeq" id="XP_063130328.1">
    <molecule id="D3Z9H7-1"/>
    <property type="nucleotide sequence ID" value="XM_063274258.1"/>
</dbReference>
<dbReference type="RefSeq" id="XP_063130329.1">
    <molecule id="D3Z9H7-1"/>
    <property type="nucleotide sequence ID" value="XM_063274259.1"/>
</dbReference>
<dbReference type="RefSeq" id="XP_063130330.1">
    <molecule id="D3Z9H7-1"/>
    <property type="nucleotide sequence ID" value="XM_063274260.1"/>
</dbReference>
<dbReference type="SMR" id="D3Z9H7"/>
<dbReference type="FunCoup" id="D3Z9H7">
    <property type="interactions" value="692"/>
</dbReference>
<dbReference type="STRING" id="10116.ENSRNOP00000027789"/>
<dbReference type="GlyGen" id="D3Z9H7">
    <property type="glycosylation" value="4 sites"/>
</dbReference>
<dbReference type="iPTMnet" id="D3Z9H7"/>
<dbReference type="PhosphoSitePlus" id="D3Z9H7"/>
<dbReference type="PaxDb" id="10116-ENSRNOP00000027789"/>
<dbReference type="PeptideAtlas" id="D3Z9H7"/>
<dbReference type="Ensembl" id="ENSRNOT00000027789.6">
    <molecule id="D3Z9H7-1"/>
    <property type="protein sequence ID" value="ENSRNOP00000027789.4"/>
    <property type="gene ID" value="ENSRNOG00000020482.8"/>
</dbReference>
<dbReference type="Ensembl" id="ENSRNOT00000089584.2">
    <molecule id="D3Z9H7-2"/>
    <property type="protein sequence ID" value="ENSRNOP00000071490.1"/>
    <property type="gene ID" value="ENSRNOG00000020482.8"/>
</dbReference>
<dbReference type="GeneID" id="305897"/>
<dbReference type="KEGG" id="rno:305897"/>
<dbReference type="AGR" id="RGD:1310749"/>
<dbReference type="CTD" id="4776"/>
<dbReference type="RGD" id="1310749">
    <property type="gene designation" value="Nfatc4"/>
</dbReference>
<dbReference type="eggNOG" id="ENOG502RIHQ">
    <property type="taxonomic scope" value="Eukaryota"/>
</dbReference>
<dbReference type="GeneTree" id="ENSGT00940000160923"/>
<dbReference type="HOGENOM" id="CLU_010185_2_0_1"/>
<dbReference type="InParanoid" id="D3Z9H7"/>
<dbReference type="OMA" id="NMTAIDC"/>
<dbReference type="OrthoDB" id="5346094at2759"/>
<dbReference type="TreeFam" id="TF326480"/>
<dbReference type="PRO" id="PR:D3Z9H7"/>
<dbReference type="Proteomes" id="UP000002494">
    <property type="component" value="Chromosome 15"/>
</dbReference>
<dbReference type="Proteomes" id="UP000234681">
    <property type="component" value="Chromosome 15"/>
</dbReference>
<dbReference type="Bgee" id="ENSRNOG00000020482">
    <property type="expression patterns" value="Expressed in pancreas and 19 other cell types or tissues"/>
</dbReference>
<dbReference type="GO" id="GO:0005737">
    <property type="term" value="C:cytoplasm"/>
    <property type="evidence" value="ECO:0000314"/>
    <property type="project" value="UniProtKB"/>
</dbReference>
<dbReference type="GO" id="GO:0005829">
    <property type="term" value="C:cytosol"/>
    <property type="evidence" value="ECO:0000266"/>
    <property type="project" value="RGD"/>
</dbReference>
<dbReference type="GO" id="GO:0005634">
    <property type="term" value="C:nucleus"/>
    <property type="evidence" value="ECO:0000314"/>
    <property type="project" value="UniProtKB"/>
</dbReference>
<dbReference type="GO" id="GO:0005667">
    <property type="term" value="C:transcription regulator complex"/>
    <property type="evidence" value="ECO:0000266"/>
    <property type="project" value="RGD"/>
</dbReference>
<dbReference type="GO" id="GO:0003700">
    <property type="term" value="F:DNA-binding transcription factor activity"/>
    <property type="evidence" value="ECO:0000315"/>
    <property type="project" value="RGD"/>
</dbReference>
<dbReference type="GO" id="GO:0000981">
    <property type="term" value="F:DNA-binding transcription factor activity, RNA polymerase II-specific"/>
    <property type="evidence" value="ECO:0000266"/>
    <property type="project" value="RGD"/>
</dbReference>
<dbReference type="GO" id="GO:0001227">
    <property type="term" value="F:DNA-binding transcription repressor activity, RNA polymerase II-specific"/>
    <property type="evidence" value="ECO:0000266"/>
    <property type="project" value="RGD"/>
</dbReference>
<dbReference type="GO" id="GO:0042975">
    <property type="term" value="F:peroxisome proliferator activated receptor binding"/>
    <property type="evidence" value="ECO:0000353"/>
    <property type="project" value="RGD"/>
</dbReference>
<dbReference type="GO" id="GO:0000978">
    <property type="term" value="F:RNA polymerase II cis-regulatory region sequence-specific DNA binding"/>
    <property type="evidence" value="ECO:0000266"/>
    <property type="project" value="RGD"/>
</dbReference>
<dbReference type="GO" id="GO:1990837">
    <property type="term" value="F:sequence-specific double-stranded DNA binding"/>
    <property type="evidence" value="ECO:0000266"/>
    <property type="project" value="RGD"/>
</dbReference>
<dbReference type="GO" id="GO:0000976">
    <property type="term" value="F:transcription cis-regulatory region binding"/>
    <property type="evidence" value="ECO:0000250"/>
    <property type="project" value="UniProtKB"/>
</dbReference>
<dbReference type="GO" id="GO:0031547">
    <property type="term" value="P:brain-derived neurotrophic factor receptor signaling pathway"/>
    <property type="evidence" value="ECO:0000266"/>
    <property type="project" value="RGD"/>
</dbReference>
<dbReference type="GO" id="GO:0001569">
    <property type="term" value="P:branching involved in blood vessel morphogenesis"/>
    <property type="evidence" value="ECO:0000266"/>
    <property type="project" value="RGD"/>
</dbReference>
<dbReference type="GO" id="GO:0033173">
    <property type="term" value="P:calcineurin-NFAT signaling cascade"/>
    <property type="evidence" value="ECO:0000266"/>
    <property type="project" value="RGD"/>
</dbReference>
<dbReference type="GO" id="GO:0045333">
    <property type="term" value="P:cellular respiration"/>
    <property type="evidence" value="ECO:0000266"/>
    <property type="project" value="RGD"/>
</dbReference>
<dbReference type="GO" id="GO:0071285">
    <property type="term" value="P:cellular response to lithium ion"/>
    <property type="evidence" value="ECO:0000266"/>
    <property type="project" value="RGD"/>
</dbReference>
<dbReference type="GO" id="GO:0034644">
    <property type="term" value="P:cellular response to UV"/>
    <property type="evidence" value="ECO:0000266"/>
    <property type="project" value="RGD"/>
</dbReference>
<dbReference type="GO" id="GO:0048813">
    <property type="term" value="P:dendrite morphogenesis"/>
    <property type="evidence" value="ECO:0000266"/>
    <property type="project" value="RGD"/>
</dbReference>
<dbReference type="GO" id="GO:0007507">
    <property type="term" value="P:heart development"/>
    <property type="evidence" value="ECO:0000266"/>
    <property type="project" value="RGD"/>
</dbReference>
<dbReference type="GO" id="GO:0008630">
    <property type="term" value="P:intrinsic apoptotic signaling pathway in response to DNA damage"/>
    <property type="evidence" value="ECO:0000266"/>
    <property type="project" value="RGD"/>
</dbReference>
<dbReference type="GO" id="GO:0007616">
    <property type="term" value="P:long-term memory"/>
    <property type="evidence" value="ECO:0000266"/>
    <property type="project" value="RGD"/>
</dbReference>
<dbReference type="GO" id="GO:0060291">
    <property type="term" value="P:long-term synaptic potentiation"/>
    <property type="evidence" value="ECO:0000266"/>
    <property type="project" value="RGD"/>
</dbReference>
<dbReference type="GO" id="GO:0050774">
    <property type="term" value="P:negative regulation of dendrite morphogenesis"/>
    <property type="evidence" value="ECO:0000266"/>
    <property type="project" value="RGD"/>
</dbReference>
<dbReference type="GO" id="GO:1902894">
    <property type="term" value="P:negative regulation of miRNA transcription"/>
    <property type="evidence" value="ECO:0000266"/>
    <property type="project" value="RGD"/>
</dbReference>
<dbReference type="GO" id="GO:0043524">
    <property type="term" value="P:negative regulation of neuron apoptotic process"/>
    <property type="evidence" value="ECO:0000266"/>
    <property type="project" value="RGD"/>
</dbReference>
<dbReference type="GO" id="GO:2000297">
    <property type="term" value="P:negative regulation of synapse maturation"/>
    <property type="evidence" value="ECO:0000266"/>
    <property type="project" value="RGD"/>
</dbReference>
<dbReference type="GO" id="GO:0000122">
    <property type="term" value="P:negative regulation of transcription by RNA polymerase II"/>
    <property type="evidence" value="ECO:0000266"/>
    <property type="project" value="RGD"/>
</dbReference>
<dbReference type="GO" id="GO:0030178">
    <property type="term" value="P:negative regulation of Wnt signaling pathway"/>
    <property type="evidence" value="ECO:0000266"/>
    <property type="project" value="RGD"/>
</dbReference>
<dbReference type="GO" id="GO:0051402">
    <property type="term" value="P:neuron apoptotic process"/>
    <property type="evidence" value="ECO:0000266"/>
    <property type="project" value="RGD"/>
</dbReference>
<dbReference type="GO" id="GO:2001235">
    <property type="term" value="P:positive regulation of apoptotic signaling pathway"/>
    <property type="evidence" value="ECO:0000266"/>
    <property type="project" value="RGD"/>
</dbReference>
<dbReference type="GO" id="GO:0043525">
    <property type="term" value="P:positive regulation of neuron apoptotic process"/>
    <property type="evidence" value="ECO:0000266"/>
    <property type="project" value="RGD"/>
</dbReference>
<dbReference type="GO" id="GO:0045944">
    <property type="term" value="P:positive regulation of transcription by RNA polymerase II"/>
    <property type="evidence" value="ECO:0000314"/>
    <property type="project" value="UniProtKB"/>
</dbReference>
<dbReference type="GO" id="GO:0032760">
    <property type="term" value="P:positive regulation of tumor necrosis factor production"/>
    <property type="evidence" value="ECO:0000266"/>
    <property type="project" value="RGD"/>
</dbReference>
<dbReference type="GO" id="GO:0006355">
    <property type="term" value="P:regulation of DNA-templated transcription"/>
    <property type="evidence" value="ECO:0000266"/>
    <property type="project" value="RGD"/>
</dbReference>
<dbReference type="GO" id="GO:0048167">
    <property type="term" value="P:regulation of synaptic plasticity"/>
    <property type="evidence" value="ECO:0000315"/>
    <property type="project" value="RGD"/>
</dbReference>
<dbReference type="GO" id="GO:0060074">
    <property type="term" value="P:synapse maturation"/>
    <property type="evidence" value="ECO:0000266"/>
    <property type="project" value="RGD"/>
</dbReference>
<dbReference type="GO" id="GO:0006366">
    <property type="term" value="P:transcription by RNA polymerase II"/>
    <property type="evidence" value="ECO:0000266"/>
    <property type="project" value="RGD"/>
</dbReference>
<dbReference type="GO" id="GO:0097084">
    <property type="term" value="P:vascular associated smooth muscle cell development"/>
    <property type="evidence" value="ECO:0000266"/>
    <property type="project" value="RGD"/>
</dbReference>
<dbReference type="GO" id="GO:0035886">
    <property type="term" value="P:vascular associated smooth muscle cell differentiation"/>
    <property type="evidence" value="ECO:0000266"/>
    <property type="project" value="RGD"/>
</dbReference>
<dbReference type="CDD" id="cd01178">
    <property type="entry name" value="IPT_NFAT"/>
    <property type="match status" value="1"/>
</dbReference>
<dbReference type="CDD" id="cd07881">
    <property type="entry name" value="RHD-n_NFAT"/>
    <property type="match status" value="1"/>
</dbReference>
<dbReference type="FunFam" id="2.60.40.10:FF:000040">
    <property type="entry name" value="Nuclear factor of activated T-cells, cytoplasmic, calcineurin-dependent 2"/>
    <property type="match status" value="1"/>
</dbReference>
<dbReference type="FunFam" id="2.60.40.340:FF:000001">
    <property type="entry name" value="Nuclear factor of activated T-cells, cytoplasmic, calcineurin-dependent 2"/>
    <property type="match status" value="1"/>
</dbReference>
<dbReference type="Gene3D" id="2.60.40.10">
    <property type="entry name" value="Immunoglobulins"/>
    <property type="match status" value="1"/>
</dbReference>
<dbReference type="Gene3D" id="2.60.40.340">
    <property type="entry name" value="Rel homology domain (RHD), DNA-binding domain"/>
    <property type="match status" value="1"/>
</dbReference>
<dbReference type="InterPro" id="IPR013783">
    <property type="entry name" value="Ig-like_fold"/>
</dbReference>
<dbReference type="InterPro" id="IPR014756">
    <property type="entry name" value="Ig_E-set"/>
</dbReference>
<dbReference type="InterPro" id="IPR002909">
    <property type="entry name" value="IPT_dom"/>
</dbReference>
<dbReference type="InterPro" id="IPR008366">
    <property type="entry name" value="NFAT"/>
</dbReference>
<dbReference type="InterPro" id="IPR008967">
    <property type="entry name" value="p53-like_TF_DNA-bd_sf"/>
</dbReference>
<dbReference type="InterPro" id="IPR032397">
    <property type="entry name" value="RHD_dimer"/>
</dbReference>
<dbReference type="InterPro" id="IPR011539">
    <property type="entry name" value="RHD_DNA_bind_dom"/>
</dbReference>
<dbReference type="InterPro" id="IPR037059">
    <property type="entry name" value="RHD_DNA_bind_dom_sf"/>
</dbReference>
<dbReference type="PANTHER" id="PTHR12533">
    <property type="entry name" value="NFAT"/>
    <property type="match status" value="1"/>
</dbReference>
<dbReference type="PANTHER" id="PTHR12533:SF11">
    <property type="entry name" value="NUCLEAR FACTOR OF ACTIVATED T-CELLS, CYTOPLASMIC 4"/>
    <property type="match status" value="1"/>
</dbReference>
<dbReference type="Pfam" id="PF16179">
    <property type="entry name" value="RHD_dimer"/>
    <property type="match status" value="1"/>
</dbReference>
<dbReference type="Pfam" id="PF00554">
    <property type="entry name" value="RHD_DNA_bind"/>
    <property type="match status" value="1"/>
</dbReference>
<dbReference type="PRINTS" id="PR01789">
    <property type="entry name" value="NUCFACTORATC"/>
</dbReference>
<dbReference type="SMART" id="SM00429">
    <property type="entry name" value="IPT"/>
    <property type="match status" value="1"/>
</dbReference>
<dbReference type="SUPFAM" id="SSF81296">
    <property type="entry name" value="E set domains"/>
    <property type="match status" value="1"/>
</dbReference>
<dbReference type="SUPFAM" id="SSF49417">
    <property type="entry name" value="p53-like transcription factors"/>
    <property type="match status" value="1"/>
</dbReference>
<dbReference type="PROSITE" id="PS50254">
    <property type="entry name" value="REL_2"/>
    <property type="match status" value="1"/>
</dbReference>
<name>NFAC4_RAT</name>
<reference key="1">
    <citation type="journal article" date="2004" name="Nature">
        <title>Genome sequence of the Brown Norway rat yields insights into mammalian evolution.</title>
        <authorList>
            <person name="Gibbs R.A."/>
            <person name="Weinstock G.M."/>
            <person name="Metzker M.L."/>
            <person name="Muzny D.M."/>
            <person name="Sodergren E.J."/>
            <person name="Scherer S."/>
            <person name="Scott G."/>
            <person name="Steffen D."/>
            <person name="Worley K.C."/>
            <person name="Burch P.E."/>
            <person name="Okwuonu G."/>
            <person name="Hines S."/>
            <person name="Lewis L."/>
            <person name="Deramo C."/>
            <person name="Delgado O."/>
            <person name="Dugan-Rocha S."/>
            <person name="Miner G."/>
            <person name="Morgan M."/>
            <person name="Hawes A."/>
            <person name="Gill R."/>
            <person name="Holt R.A."/>
            <person name="Adams M.D."/>
            <person name="Amanatides P.G."/>
            <person name="Baden-Tillson H."/>
            <person name="Barnstead M."/>
            <person name="Chin S."/>
            <person name="Evans C.A."/>
            <person name="Ferriera S."/>
            <person name="Fosler C."/>
            <person name="Glodek A."/>
            <person name="Gu Z."/>
            <person name="Jennings D."/>
            <person name="Kraft C.L."/>
            <person name="Nguyen T."/>
            <person name="Pfannkoch C.M."/>
            <person name="Sitter C."/>
            <person name="Sutton G.G."/>
            <person name="Venter J.C."/>
            <person name="Woodage T."/>
            <person name="Smith D."/>
            <person name="Lee H.-M."/>
            <person name="Gustafson E."/>
            <person name="Cahill P."/>
            <person name="Kana A."/>
            <person name="Doucette-Stamm L."/>
            <person name="Weinstock K."/>
            <person name="Fechtel K."/>
            <person name="Weiss R.B."/>
            <person name="Dunn D.M."/>
            <person name="Green E.D."/>
            <person name="Blakesley R.W."/>
            <person name="Bouffard G.G."/>
            <person name="De Jong P.J."/>
            <person name="Osoegawa K."/>
            <person name="Zhu B."/>
            <person name="Marra M."/>
            <person name="Schein J."/>
            <person name="Bosdet I."/>
            <person name="Fjell C."/>
            <person name="Jones S."/>
            <person name="Krzywinski M."/>
            <person name="Mathewson C."/>
            <person name="Siddiqui A."/>
            <person name="Wye N."/>
            <person name="McPherson J."/>
            <person name="Zhao S."/>
            <person name="Fraser C.M."/>
            <person name="Shetty J."/>
            <person name="Shatsman S."/>
            <person name="Geer K."/>
            <person name="Chen Y."/>
            <person name="Abramzon S."/>
            <person name="Nierman W.C."/>
            <person name="Havlak P.H."/>
            <person name="Chen R."/>
            <person name="Durbin K.J."/>
            <person name="Egan A."/>
            <person name="Ren Y."/>
            <person name="Song X.-Z."/>
            <person name="Li B."/>
            <person name="Liu Y."/>
            <person name="Qin X."/>
            <person name="Cawley S."/>
            <person name="Cooney A.J."/>
            <person name="D'Souza L.M."/>
            <person name="Martin K."/>
            <person name="Wu J.Q."/>
            <person name="Gonzalez-Garay M.L."/>
            <person name="Jackson A.R."/>
            <person name="Kalafus K.J."/>
            <person name="McLeod M.P."/>
            <person name="Milosavljevic A."/>
            <person name="Virk D."/>
            <person name="Volkov A."/>
            <person name="Wheeler D.A."/>
            <person name="Zhang Z."/>
            <person name="Bailey J.A."/>
            <person name="Eichler E.E."/>
            <person name="Tuzun E."/>
            <person name="Birney E."/>
            <person name="Mongin E."/>
            <person name="Ureta-Vidal A."/>
            <person name="Woodwark C."/>
            <person name="Zdobnov E."/>
            <person name="Bork P."/>
            <person name="Suyama M."/>
            <person name="Torrents D."/>
            <person name="Alexandersson M."/>
            <person name="Trask B.J."/>
            <person name="Young J.M."/>
            <person name="Huang H."/>
            <person name="Wang H."/>
            <person name="Xing H."/>
            <person name="Daniels S."/>
            <person name="Gietzen D."/>
            <person name="Schmidt J."/>
            <person name="Stevens K."/>
            <person name="Vitt U."/>
            <person name="Wingrove J."/>
            <person name="Camara F."/>
            <person name="Mar Alba M."/>
            <person name="Abril J.F."/>
            <person name="Guigo R."/>
            <person name="Smit A."/>
            <person name="Dubchak I."/>
            <person name="Rubin E.M."/>
            <person name="Couronne O."/>
            <person name="Poliakov A."/>
            <person name="Huebner N."/>
            <person name="Ganten D."/>
            <person name="Goesele C."/>
            <person name="Hummel O."/>
            <person name="Kreitler T."/>
            <person name="Lee Y.-A."/>
            <person name="Monti J."/>
            <person name="Schulz H."/>
            <person name="Zimdahl H."/>
            <person name="Himmelbauer H."/>
            <person name="Lehrach H."/>
            <person name="Jacob H.J."/>
            <person name="Bromberg S."/>
            <person name="Gullings-Handley J."/>
            <person name="Jensen-Seaman M.I."/>
            <person name="Kwitek A.E."/>
            <person name="Lazar J."/>
            <person name="Pasko D."/>
            <person name="Tonellato P.J."/>
            <person name="Twigger S."/>
            <person name="Ponting C.P."/>
            <person name="Duarte J.M."/>
            <person name="Rice S."/>
            <person name="Goodstadt L."/>
            <person name="Beatson S.A."/>
            <person name="Emes R.D."/>
            <person name="Winter E.E."/>
            <person name="Webber C."/>
            <person name="Brandt P."/>
            <person name="Nyakatura G."/>
            <person name="Adetobi M."/>
            <person name="Chiaromonte F."/>
            <person name="Elnitski L."/>
            <person name="Eswara P."/>
            <person name="Hardison R.C."/>
            <person name="Hou M."/>
            <person name="Kolbe D."/>
            <person name="Makova K."/>
            <person name="Miller W."/>
            <person name="Nekrutenko A."/>
            <person name="Riemer C."/>
            <person name="Schwartz S."/>
            <person name="Taylor J."/>
            <person name="Yang S."/>
            <person name="Zhang Y."/>
            <person name="Lindpaintner K."/>
            <person name="Andrews T.D."/>
            <person name="Caccamo M."/>
            <person name="Clamp M."/>
            <person name="Clarke L."/>
            <person name="Curwen V."/>
            <person name="Durbin R.M."/>
            <person name="Eyras E."/>
            <person name="Searle S.M."/>
            <person name="Cooper G.M."/>
            <person name="Batzoglou S."/>
            <person name="Brudno M."/>
            <person name="Sidow A."/>
            <person name="Stone E.A."/>
            <person name="Payseur B.A."/>
            <person name="Bourque G."/>
            <person name="Lopez-Otin C."/>
            <person name="Puente X.S."/>
            <person name="Chakrabarti K."/>
            <person name="Chatterji S."/>
            <person name="Dewey C."/>
            <person name="Pachter L."/>
            <person name="Bray N."/>
            <person name="Yap V.B."/>
            <person name="Caspi A."/>
            <person name="Tesler G."/>
            <person name="Pevzner P.A."/>
            <person name="Haussler D."/>
            <person name="Roskin K.M."/>
            <person name="Baertsch R."/>
            <person name="Clawson H."/>
            <person name="Furey T.S."/>
            <person name="Hinrichs A.S."/>
            <person name="Karolchik D."/>
            <person name="Kent W.J."/>
            <person name="Rosenbloom K.R."/>
            <person name="Trumbower H."/>
            <person name="Weirauch M."/>
            <person name="Cooper D.N."/>
            <person name="Stenson P.D."/>
            <person name="Ma B."/>
            <person name="Brent M."/>
            <person name="Arumugam M."/>
            <person name="Shteynberg D."/>
            <person name="Copley R.R."/>
            <person name="Taylor M.S."/>
            <person name="Riethman H."/>
            <person name="Mudunuri U."/>
            <person name="Peterson J."/>
            <person name="Guyer M."/>
            <person name="Felsenfeld A."/>
            <person name="Old S."/>
            <person name="Mockrin S."/>
            <person name="Collins F.S."/>
        </authorList>
    </citation>
    <scope>NUCLEOTIDE SEQUENCE [LARGE SCALE GENOMIC DNA]</scope>
    <source>
        <strain>Brown Norway</strain>
    </source>
</reference>
<reference key="2">
    <citation type="submission" date="2005-07" db="EMBL/GenBank/DDBJ databases">
        <authorList>
            <person name="Mural R.J."/>
            <person name="Adams M.D."/>
            <person name="Myers E.W."/>
            <person name="Smith H.O."/>
            <person name="Venter J.C."/>
        </authorList>
    </citation>
    <scope>NUCLEOTIDE SEQUENCE [LARGE SCALE GENOMIC DNA]</scope>
    <source>
        <strain>Brown Norway</strain>
    </source>
</reference>
<reference key="3">
    <citation type="journal article" date="1998" name="Cell">
        <title>A calcineurin-dependent transcriptional pathway for cardiac hypertrophy.</title>
        <authorList>
            <person name="Molkentin J.D."/>
            <person name="Lu J.-R."/>
            <person name="Antos C.L."/>
            <person name="Markham B."/>
            <person name="Richardson J."/>
            <person name="Robbins J."/>
            <person name="Grant S.R."/>
            <person name="Olson E.N."/>
        </authorList>
    </citation>
    <scope>FUNCTION</scope>
</reference>
<reference key="4">
    <citation type="journal article" date="2002" name="Mol. Cell. Biol.">
        <title>Targeted disruption of NFATc3, but not NFATc4, reveals an intrinsic defect in calcineurin-mediated cardiac hypertrophic growth.</title>
        <authorList>
            <person name="Wilkins B.J."/>
            <person name="De Windt L.J."/>
            <person name="Bueno O.F."/>
            <person name="Braz J.C."/>
            <person name="Glascock B.J."/>
            <person name="Kimball T.F."/>
            <person name="Molkentin J.D."/>
        </authorList>
    </citation>
    <scope>FUNCTION</scope>
    <scope>TISSUE SPECIFICITY</scope>
</reference>
<reference key="5">
    <citation type="journal article" date="2008" name="FEBS Lett.">
        <title>Regulation of the stability and transcriptional activity of NFATc4 by ubiquitination.</title>
        <authorList>
            <person name="Fan Y."/>
            <person name="Xie P."/>
            <person name="Zhang T."/>
            <person name="Zhang H."/>
            <person name="Gu D."/>
            <person name="She M."/>
            <person name="Li H."/>
        </authorList>
    </citation>
    <scope>FUNCTION</scope>
    <scope>UBIQUITINATION</scope>
</reference>
<reference key="6">
    <citation type="journal article" date="2010" name="J. Cell. Mol. Med.">
        <title>Cross-talk between calcineurin/NFAT and Jak/STAT signalling induces cardioprotective alphaB-crystallin gene expression in response to hypertrophic stimuli.</title>
        <authorList>
            <person name="Manukyan I."/>
            <person name="Galatioto J."/>
            <person name="Mascareno E."/>
            <person name="Bhaduri S."/>
            <person name="Siddiqui M.A."/>
        </authorList>
    </citation>
    <scope>FUNCTION</scope>
</reference>
<reference key="7">
    <citation type="journal article" date="2020" name="J. Am. Heart Assoc.">
        <title>NULP1 Alleviates Cardiac Hypertrophy by Suppressing NFAT3 Transcriptional Activity.</title>
        <authorList>
            <person name="Zhang X."/>
            <person name="Lei F."/>
            <person name="Wang X.M."/>
            <person name="Deng K.Q."/>
            <person name="Ji Y.X."/>
            <person name="Zhang Y."/>
            <person name="Li H."/>
            <person name="Zhang X.D."/>
            <person name="Lu Z."/>
            <person name="Zhang P."/>
        </authorList>
    </citation>
    <scope>FUNCTION</scope>
    <scope>INTERACTION WITH TCF25</scope>
</reference>
<sequence>MGAASCEDEELEFKLVFGEEKEAPPLGPGGPGEELDSEDAPPCCRLALGEPLPYGAAPIGIPRPPPPRPGMHSPPPRPAPSPGTWESQPPRSVRLGGPGGTAGGTGGGRVLECPSIRITSISPTPDPPTSLEDAPETWGDGSPRDYPPPEGFGGYREAGGQGGGAFFSPSPGSSSLSSWSFFSDASDEAALYAACDEVESELNEAASRFGLSSPLPSPRASPRPWTPEDPWSLYGPSSGGRAPEDSWLLLSAPGPIPASPRPASPCGKRRYSSSGTPSSASPALSRRGSLGEEGPEPPPPPPLPLVRDPSSSGPFDYVGAPPTESVPQKTRRTSSEQAVALPRSEEPASCNGKLPSGTEDSVAAPGALRKEMAGMDYLAVPSPLAWSKARIGGHSPIFRTSALPPLDWPLPSQYEQLELRIEVQPRAHHRAHYETEGSRGAVKAAPGGHPVVKLLGYNEKPLTLQMFIGTADERSLRPHAFYQVHRITGKMVATASYEAVVSGTKVLEMTLLPENNMAANIDCAGILKLRNSDIELRKGETDIGRKNTRVRLVFRVHVPQGGGKVVSVQAASVPIECSQRSAQELPQVEAYSPSACSVRGGEELVLTGSNFLPDSKVVFIERGPDGKLQWEEEAAVNRLQSSEVTLTLTIPEYSNKRVSRPVQVYFYVSNGRRKRSPTQSFKFLPVIFKEEPLPDSSLRGFPSTSGPPFGPDMDFSPPRPPYPSYPHEDPAYETPYLSEGFGYSTPALYPQTGPPPSYRSGLRMFPETGGTTGCARLPSVSFLPRPFPGDQYGGQGSSFPLGLPFSPPAPFRPPLPSSPPLEDPFNPQSAVHPLPAEGYNEVGPGYTPGEGASEQEKSRGGYGSGFRDNVPIQGITLEEVSEIIGRDLSGFPARPGEEPPA</sequence>
<keyword id="KW-0010">Activator</keyword>
<keyword id="KW-0025">Alternative splicing</keyword>
<keyword id="KW-0963">Cytoplasm</keyword>
<keyword id="KW-0217">Developmental protein</keyword>
<keyword id="KW-0221">Differentiation</keyword>
<keyword id="KW-0238">DNA-binding</keyword>
<keyword id="KW-1017">Isopeptide bond</keyword>
<keyword id="KW-0539">Nucleus</keyword>
<keyword id="KW-0597">Phosphoprotein</keyword>
<keyword id="KW-1185">Reference proteome</keyword>
<keyword id="KW-0677">Repeat</keyword>
<keyword id="KW-0804">Transcription</keyword>
<keyword id="KW-0805">Transcription regulation</keyword>
<keyword id="KW-0832">Ubl conjugation</keyword>
<organism>
    <name type="scientific">Rattus norvegicus</name>
    <name type="common">Rat</name>
    <dbReference type="NCBI Taxonomy" id="10116"/>
    <lineage>
        <taxon>Eukaryota</taxon>
        <taxon>Metazoa</taxon>
        <taxon>Chordata</taxon>
        <taxon>Craniata</taxon>
        <taxon>Vertebrata</taxon>
        <taxon>Euteleostomi</taxon>
        <taxon>Mammalia</taxon>
        <taxon>Eutheria</taxon>
        <taxon>Euarchontoglires</taxon>
        <taxon>Glires</taxon>
        <taxon>Rodentia</taxon>
        <taxon>Myomorpha</taxon>
        <taxon>Muroidea</taxon>
        <taxon>Muridae</taxon>
        <taxon>Murinae</taxon>
        <taxon>Rattus</taxon>
    </lineage>
</organism>
<evidence type="ECO:0000250" key="1">
    <source>
        <dbReference type="UniProtKB" id="O95644"/>
    </source>
</evidence>
<evidence type="ECO:0000250" key="2">
    <source>
        <dbReference type="UniProtKB" id="Q14934"/>
    </source>
</evidence>
<evidence type="ECO:0000250" key="3">
    <source>
        <dbReference type="UniProtKB" id="Q8K120"/>
    </source>
</evidence>
<evidence type="ECO:0000255" key="4"/>
<evidence type="ECO:0000255" key="5">
    <source>
        <dbReference type="PROSITE-ProRule" id="PRU00265"/>
    </source>
</evidence>
<evidence type="ECO:0000256" key="6">
    <source>
        <dbReference type="SAM" id="MobiDB-lite"/>
    </source>
</evidence>
<evidence type="ECO:0000269" key="7">
    <source>
    </source>
</evidence>
<evidence type="ECO:0000269" key="8">
    <source>
    </source>
</evidence>
<evidence type="ECO:0000269" key="9">
    <source>
    </source>
</evidence>
<evidence type="ECO:0000269" key="10">
    <source>
    </source>
</evidence>
<evidence type="ECO:0000269" key="11">
    <source>
    </source>
</evidence>
<evidence type="ECO:0000303" key="12">
    <source>
    </source>
</evidence>
<feature type="chain" id="PRO_0000446288" description="Nuclear factor of activated T-cells, cytoplasmic 4">
    <location>
        <begin position="1"/>
        <end position="901"/>
    </location>
</feature>
<feature type="repeat" description="SP 1" evidence="4">
    <location>
        <begin position="213"/>
        <end position="229"/>
    </location>
</feature>
<feature type="repeat" description="SP 2; approximate" evidence="4">
    <location>
        <begin position="277"/>
        <end position="293"/>
    </location>
</feature>
<feature type="domain" description="RHD" evidence="5">
    <location>
        <begin position="401"/>
        <end position="582"/>
    </location>
</feature>
<feature type="domain" description="IPT/TIG" evidence="4">
    <location>
        <begin position="586"/>
        <end position="683"/>
    </location>
</feature>
<feature type="DNA-binding region" evidence="2">
    <location>
        <begin position="430"/>
        <end position="437"/>
    </location>
</feature>
<feature type="region of interest" description="Disordered" evidence="6">
    <location>
        <begin position="1"/>
        <end position="180"/>
    </location>
</feature>
<feature type="region of interest" description="Calcineurin-binding" evidence="2">
    <location>
        <begin position="114"/>
        <end position="119"/>
    </location>
</feature>
<feature type="region of interest" description="Disordered" evidence="6">
    <location>
        <begin position="203"/>
        <end position="361"/>
    </location>
</feature>
<feature type="region of interest" description="2 approximate SP repeats" evidence="4">
    <location>
        <begin position="213"/>
        <end position="293"/>
    </location>
</feature>
<feature type="region of interest" description="Disordered" evidence="6">
    <location>
        <begin position="697"/>
        <end position="721"/>
    </location>
</feature>
<feature type="region of interest" description="Disordered" evidence="6">
    <location>
        <begin position="791"/>
        <end position="868"/>
    </location>
</feature>
<feature type="short sequence motif" description="Nuclear localization signal" evidence="4">
    <location>
        <begin position="268"/>
        <end position="270"/>
    </location>
</feature>
<feature type="short sequence motif" description="Nuclear localization signal" evidence="4">
    <location>
        <begin position="672"/>
        <end position="674"/>
    </location>
</feature>
<feature type="compositionally biased region" description="Acidic residues" evidence="6">
    <location>
        <begin position="1"/>
        <end position="11"/>
    </location>
</feature>
<feature type="compositionally biased region" description="Pro residues" evidence="6">
    <location>
        <begin position="61"/>
        <end position="81"/>
    </location>
</feature>
<feature type="compositionally biased region" description="Gly residues" evidence="6">
    <location>
        <begin position="96"/>
        <end position="109"/>
    </location>
</feature>
<feature type="compositionally biased region" description="Low complexity" evidence="6">
    <location>
        <begin position="114"/>
        <end position="123"/>
    </location>
</feature>
<feature type="compositionally biased region" description="Gly residues" evidence="6">
    <location>
        <begin position="151"/>
        <end position="165"/>
    </location>
</feature>
<feature type="compositionally biased region" description="Low complexity" evidence="6">
    <location>
        <begin position="166"/>
        <end position="180"/>
    </location>
</feature>
<feature type="compositionally biased region" description="Pro residues" evidence="6">
    <location>
        <begin position="215"/>
        <end position="227"/>
    </location>
</feature>
<feature type="compositionally biased region" description="Pro residues" evidence="6">
    <location>
        <begin position="254"/>
        <end position="263"/>
    </location>
</feature>
<feature type="compositionally biased region" description="Low complexity" evidence="6">
    <location>
        <begin position="272"/>
        <end position="288"/>
    </location>
</feature>
<feature type="compositionally biased region" description="Pro residues" evidence="6">
    <location>
        <begin position="805"/>
        <end position="822"/>
    </location>
</feature>
<feature type="modified residue" description="Phosphoserine" evidence="3">
    <location>
        <position position="168"/>
    </location>
</feature>
<feature type="modified residue" description="Phosphoserine" evidence="3">
    <location>
        <position position="170"/>
    </location>
</feature>
<feature type="modified residue" description="Phosphoserine" evidence="2">
    <location>
        <position position="213"/>
    </location>
</feature>
<feature type="modified residue" description="Phosphoserine" evidence="2">
    <location>
        <position position="217"/>
    </location>
</feature>
<feature type="modified residue" description="Phosphoserine" evidence="3">
    <location>
        <position position="289"/>
    </location>
</feature>
<feature type="modified residue" description="Phosphoserine" evidence="2">
    <location>
        <position position="334"/>
    </location>
</feature>
<feature type="modified residue" description="Phosphoserine" evidence="2">
    <location>
        <position position="344"/>
    </location>
</feature>
<feature type="cross-link" description="Glycyl lysine isopeptide (Lys-Gly) (interchain with G-Cter in SUMO2)" evidence="2">
    <location>
        <position position="689"/>
    </location>
</feature>
<feature type="splice variant" id="VSP_060060" description="In isoform 2.">
    <original>VSEIIGRDLSG</original>
    <variation>GGCGTGGCECE</variation>
    <location>
        <begin position="880"/>
        <end position="890"/>
    </location>
</feature>
<feature type="splice variant" id="VSP_060061" description="In isoform 2.">
    <location>
        <begin position="891"/>
        <end position="901"/>
    </location>
</feature>
<protein>
    <recommendedName>
        <fullName>Nuclear factor of activated T-cells, cytoplasmic 4</fullName>
        <shortName>NF-ATc4</shortName>
        <shortName>NFATc4</shortName>
    </recommendedName>
    <alternativeName>
        <fullName>T-cell transcription factor NFAT3</fullName>
        <shortName evidence="12">NF-AT3</shortName>
    </alternativeName>
</protein>
<accession>D3Z9H7</accession>
<accession>A0A0G2K0L1</accession>
<gene>
    <name type="primary">Nfatc4</name>
    <name type="synonym">Nfat3</name>
</gene>
<comment type="function">
    <text evidence="2 3 7 8 9 10 11">Ca(2+)-regulated transcription factor that is involved in several processes, including the development and function of the immune, cardiovascular, musculoskeletal, and nervous systems. Involved in T-cell activation, stimulating the transcription of cytokine genes, including that of IL2 and IL4 (PubMed:12370307, PubMed:32805187). Along with NFATC3, involved in embryonic heart development. Following JAK/STAT signaling activation and as part of a complex with NFATC3 and STAT3, binds to the alpha-beta E4 promoter region of CRYAB and activates transcription in cardiomyocytes (PubMed:19538478). Involved in mitochondrial energy metabolism required for cardiac morphogenesis and function. Transactivates many genes involved in heart physiology. Along with GATA4, binds to and activates NPPB/BNP promoter (PubMed:9568714). Activates NPPA/ANP/ANF and MYH7/beta-MHC transcription (PubMed:19026640). Binds to and transactivates AGTR2 gene promoter. Involved in the regulation of adult hippocampal neurogenesis. Involved in BDNF-driven pro-survival signaling in hippocampal adult-born neurons. Involved in the formation of long-term spatial memory and long-term potentiation. In cochlear nucleus neurons, may play a role in deafferentation-induced apoptosis during a developmental critical period when auditory neurons depend on afferent input for survival (By similarity). Binds to and activates the BACE1/Beta-secretase 1 promoter, hence may regulate the proteolytic processing of the amyloid precursor protein (APP). Plays a role in adipocyte differentiation. May be involved in myoblast differentiation into myotubes (By similarity). Binds the consensus DNA sequence 5'-GGAAAAT-3' (By similarity). In the presence of CREBBP, activates TNF transcription. Binds to PPARG gene promoter and regulates its activity (By similarity). Binds to PPARG and REG3G gene promoters (By similarity).</text>
</comment>
<comment type="subunit">
    <text evidence="2 3">Member of the multicomponent NFATC transcription complex that consists of at least two components, a pre-existing cytoplasmic component NFATC2 and an inducible nuclear component NFATC1. Other NFAT proteins, such as NFATC4, NFATC3, or members of the activating protein-1 (AP-1) family and MAF can also bind the complex. NFAT proteins can bind DNA as monomers or dimers. Component of a promoter-binding complex composed of STAT3, NFATC3 and NFATC4; complex formation is enhanced by calcineurin (By similarity). Interacts with CREBBP; this interaction potentiates transcription activation (By similarity). Interacts with MAPK8/JNK1 and MAPK9/JNK2 (By similarity). Interacts with GATA4 (via the second Zn finger) (By similarity). Interacts (via N-terminus) with IRAK1 (via C-terminus). Interacts with RPS6KA3. Interacts with HOMER1, HOMER2 and HOMER3; this interaction competes with calcineurin/PPP3CA-binding and hence prevents NFATC4 dephosphorylation and activation (By similarity). Interacts with ESR1 and ESR2; this interaction decreases NFATC4 transcriptional activity. Interacts with MTOR and MAPK7/ERK5 (By similarity). Interacts with TRIM17; this interaction prevents NFATC3 nuclear localization (By similarity). Interacts with TCF25 (via C-terminus); the interaction leads to suppression of NFATC4 transcription factor activity and is reduced following stimulation with angiotensin-2 (PubMed:32805187).</text>
</comment>
<comment type="subcellular location">
    <subcellularLocation>
        <location evidence="3">Cytoplasm</location>
    </subcellularLocation>
    <subcellularLocation>
        <location evidence="3">Nucleus</location>
    </subcellularLocation>
    <text evidence="2">When hyperphosphorylated, localizes in the cytosol. When intracellular Ca(2+) levels increase, dephosphorylation by calcineurin/PPP3CA leads to translocation into the nucleus. MAPK7/ERK5 and MTOR regulate NFATC4 nuclear export through phosphorylation at Ser-168 and Ser-170.</text>
</comment>
<comment type="alternative products">
    <event type="alternative splicing"/>
    <isoform>
        <id>D3Z9H7-1</id>
        <name>1</name>
        <sequence type="displayed"/>
    </isoform>
    <isoform>
        <id>D3Z9H7-2</id>
        <name>2</name>
        <sequence type="described" ref="VSP_060060 VSP_060061"/>
    </isoform>
</comment>
<comment type="tissue specificity">
    <text evidence="7">Expressed in heart (at protein level).</text>
</comment>
<comment type="domain">
    <text evidence="1">Rel similarity domain (RSD) or Rel homology domain (RHD) allows DNA-binding and cooperative interactions with AP-1 factors.</text>
</comment>
<comment type="PTM">
    <text evidence="2 3 8">Phosphorylated by NFATC-kinases; dephosphorylated by calcineurin/PPP3CA. Phosphorylated on Ser-168 and Ser-170 by MTOR, IRAK1, MAPK7/ERK5 and MAPK14/p38, on Ser-213 and Ser-217 by MAPK8 and MAPK9, and on Ser-289 and Ser-344 by RPS6KA3 (By similarity). Phosphorylated by GSK3B; this phosphorylation markedly increases NFATC4 ubiquitination (PubMed:19026640). Phosphorylation by MAPK8/JNK1, MAPK9/JNK2 and RPS6KA3 may stimulate NFATC4 transcriptional activity. Phosphorylation at Ser-168 and Ser-170 is stimulated by UV irradiation (By similarity).</text>
</comment>
<comment type="PTM">
    <text evidence="8">Ubiquitinated, leading to degradation by the proteasome. Ubiquitination may be stimulated by GSK3B-dependent phosphorylation. Polyubiquitin linkage mainly occurs through 'Lys-48'.</text>
</comment>